<proteinExistence type="evidence at protein level"/>
<organism>
    <name type="scientific">Rattus norvegicus</name>
    <name type="common">Rat</name>
    <dbReference type="NCBI Taxonomy" id="10116"/>
    <lineage>
        <taxon>Eukaryota</taxon>
        <taxon>Metazoa</taxon>
        <taxon>Chordata</taxon>
        <taxon>Craniata</taxon>
        <taxon>Vertebrata</taxon>
        <taxon>Euteleostomi</taxon>
        <taxon>Mammalia</taxon>
        <taxon>Eutheria</taxon>
        <taxon>Euarchontoglires</taxon>
        <taxon>Glires</taxon>
        <taxon>Rodentia</taxon>
        <taxon>Myomorpha</taxon>
        <taxon>Muroidea</taxon>
        <taxon>Muridae</taxon>
        <taxon>Murinae</taxon>
        <taxon>Rattus</taxon>
    </lineage>
</organism>
<comment type="function">
    <text evidence="2">Component of the 17S U2 SnRNP complex of the spliceosome, a large ribonucleoprotein complex that removes introns from transcribed pre-mRNAs. The 17S U2 SnRNP complex (1) directly participates in early spliceosome assembly and (2) mediates recognition of the intron branch site during pre-mRNA splicing by promoting the selection of the pre-mRNA branch-site adenosine, the nucleophile for the first step of splicing. Within the 17S U2 SnRNP complex, DDX46 plays essential roles during assembly of pre-spliceosome and proofreading of the branch site.</text>
</comment>
<comment type="catalytic activity">
    <reaction>
        <text>ATP + H2O = ADP + phosphate + H(+)</text>
        <dbReference type="Rhea" id="RHEA:13065"/>
        <dbReference type="ChEBI" id="CHEBI:15377"/>
        <dbReference type="ChEBI" id="CHEBI:15378"/>
        <dbReference type="ChEBI" id="CHEBI:30616"/>
        <dbReference type="ChEBI" id="CHEBI:43474"/>
        <dbReference type="ChEBI" id="CHEBI:456216"/>
        <dbReference type="EC" id="3.6.4.13"/>
    </reaction>
</comment>
<comment type="subunit">
    <text evidence="2">Component of the 17S U2 SnRNP complex, a ribonucleoprotein complex that contains small nuclear RNA (snRNA) U2 and a number of specific proteins. Within the 17S U2 SnRNP complex, DDX46 is part of the SF3B subcomplex, which is required for 'A' complex assembly formed by the stable binding of U2 snRNP to the branchpoint sequence in pre-mRNA. Recruited to the 17S U2 SnRNP complex following release of DDX42; DDX42 and DDX46 bind the SF3B subcomplex in a competitive manner.</text>
</comment>
<comment type="subcellular location">
    <subcellularLocation>
        <location evidence="2">Nucleus speckle</location>
    </subcellularLocation>
    <subcellularLocation>
        <location evidence="2">Nucleus</location>
        <location evidence="2">Cajal body</location>
    </subcellularLocation>
    <text evidence="2">Present in Cajal bodies (CBs) and nuclear speckles.</text>
</comment>
<comment type="similarity">
    <text evidence="7">Belongs to the DEAD box helicase family. DDX46/PRP5 subfamily.</text>
</comment>
<sequence length="1032" mass="117385">MGRESRHYRKRSASRGRSGSRSRSRSPSDKRSKRGDDRRSRSRDRDRRRERSRSRDKRRSRSRDRKRLRRSRSRERDRSRERRRSRSRDRRRSRSRSRGRRSRSSSPGSKSKKAENRSRSKEKAEGGDSSKEKKKDKDDKEDEKEKDAGNFDQNKLEEEMRKRKERVEKWREEQRKKAMENIGELKKEIEEMKQGKKWSLEDDDDDEDDPAEAEKEGNEMEDEELDPLDAYMEEVKEEVKKFNMRSVKGGAGNEKKSGPTVTKVVTVVTTKKAVVDADKKKGELMENDQDAMEYSSEEEEVDLQTALTGYQTKQRKLLEPVDHGKIEYEPFRKNFYVEVPELAKMSQEEVNVFRLEMEGITVKGKGCPKPIKSWVQCGISMKILNSLKKHGYEKPTPIQTQAIPAIMSGRDLIGIAKTGSGKTIAFLLPMFRHIMDQRSLEEGEGPIAVIMTPTRELALQITKECKKFSKTLGLRVVCVYGGTGISEQIAELKRGAEIIVCTPGRMIDMLAANSGRVTNLRRVTYVVLDEADRMFDMGFEPQVMRIVDNVRPDRQTVMFSATFPRAMEALARRILSKPIEVQVGGRSVVCSDVEQQVIVIEEEKKFLKLLELLGHYQESGSVIIFVDKQEHADGLLKDLMRASYPCMSLHGGIDQYDRDSIINDFKNGTCKLLVATSVAARGLDVKHLILVVNYSCPNHYEDYVHRAGRTGRAGNKGYAYTFITEDQARYAGDIIKALELSGTAVPPDLEKLWSDFKDQQKAEGKIIKKSSGFSGKGFKFDETEQALANERKKLQKAALGLQDSDDEDAAVDIDEQIESMFNSKKRVKDMAAPGTSSAPAPTAGNAEKLEIAKRLALRINAQKNLGIESQVDVMQQATNAILRGGPLLAPTVSAKTIAEQLAEKINAKLNYVPLEKQEEERQEGGQSESFKRYEEELEINDFPQTARWKVTSKEALQRISEYSEAAITIRGTYFPPGKEPKEGERKIYLAIESANELAVQKAKAEITRLIKEELIRLQNSYQPTNKGRYKVL</sequence>
<accession>Q62780</accession>
<keyword id="KW-0007">Acetylation</keyword>
<keyword id="KW-0067">ATP-binding</keyword>
<keyword id="KW-0175">Coiled coil</keyword>
<keyword id="KW-0903">Direct protein sequencing</keyword>
<keyword id="KW-0347">Helicase</keyword>
<keyword id="KW-0378">Hydrolase</keyword>
<keyword id="KW-1017">Isopeptide bond</keyword>
<keyword id="KW-0449">Lipoprotein</keyword>
<keyword id="KW-0507">mRNA processing</keyword>
<keyword id="KW-0508">mRNA splicing</keyword>
<keyword id="KW-0519">Myristate</keyword>
<keyword id="KW-0547">Nucleotide-binding</keyword>
<keyword id="KW-0539">Nucleus</keyword>
<keyword id="KW-0597">Phosphoprotein</keyword>
<keyword id="KW-1185">Reference proteome</keyword>
<keyword id="KW-0694">RNA-binding</keyword>
<keyword id="KW-0747">Spliceosome</keyword>
<keyword id="KW-0832">Ubl conjugation</keyword>
<reference key="1">
    <citation type="journal article" date="1995" name="J. Biol. Chem.">
        <title>A putative mammalian RNA helicase with an arginine-serine-rich domain colocalizes with a splicing factor.</title>
        <authorList>
            <person name="Sukegawa J."/>
            <person name="Blobel G."/>
        </authorList>
    </citation>
    <scope>NUCLEOTIDE SEQUENCE [MRNA]</scope>
    <scope>PROTEIN SEQUENCE OF 1016-1032</scope>
    <scope>SUBCELLULAR LOCATION</scope>
</reference>
<reference key="2">
    <citation type="journal article" date="2004" name="Genome Res.">
        <title>The status, quality, and expansion of the NIH full-length cDNA project: the Mammalian Gene Collection (MGC).</title>
        <authorList>
            <consortium name="The MGC Project Team"/>
        </authorList>
    </citation>
    <scope>NUCLEOTIDE SEQUENCE [LARGE SCALE MRNA]</scope>
    <source>
        <tissue>Placenta</tissue>
    </source>
</reference>
<reference key="3">
    <citation type="journal article" date="2006" name="Proc. Natl. Acad. Sci. U.S.A.">
        <title>Quantitative phosphoproteomics of vasopressin-sensitive renal cells: regulation of aquaporin-2 phosphorylation at two sites.</title>
        <authorList>
            <person name="Hoffert J.D."/>
            <person name="Pisitkun T."/>
            <person name="Wang G."/>
            <person name="Shen R.-F."/>
            <person name="Knepper M.A."/>
        </authorList>
    </citation>
    <scope>PHOSPHORYLATION [LARGE SCALE ANALYSIS] AT SER-804</scope>
    <scope>IDENTIFICATION BY MASS SPECTROMETRY [LARGE SCALE ANALYSIS]</scope>
</reference>
<reference key="4">
    <citation type="journal article" date="2012" name="Nat. Commun.">
        <title>Quantitative maps of protein phosphorylation sites across 14 different rat organs and tissues.</title>
        <authorList>
            <person name="Lundby A."/>
            <person name="Secher A."/>
            <person name="Lage K."/>
            <person name="Nordsborg N.B."/>
            <person name="Dmytriyev A."/>
            <person name="Lundby C."/>
            <person name="Olsen J.V."/>
        </authorList>
    </citation>
    <scope>PHOSPHORYLATION [LARGE SCALE ANALYSIS] AT SER-199 AND SER-804</scope>
    <scope>IDENTIFICATION BY MASS SPECTROMETRY [LARGE SCALE ANALYSIS]</scope>
</reference>
<feature type="initiator methionine" description="Removed" evidence="2">
    <location>
        <position position="1"/>
    </location>
</feature>
<feature type="chain" id="PRO_0000055124" description="Probable ATP-dependent RNA helicase DDX46">
    <location>
        <begin position="2"/>
        <end position="1032"/>
    </location>
</feature>
<feature type="domain" description="Helicase ATP-binding" evidence="4">
    <location>
        <begin position="403"/>
        <end position="581"/>
    </location>
</feature>
<feature type="domain" description="Helicase C-terminal" evidence="5">
    <location>
        <begin position="592"/>
        <end position="753"/>
    </location>
</feature>
<feature type="region of interest" description="Disordered" evidence="6">
    <location>
        <begin position="1"/>
        <end position="227"/>
    </location>
</feature>
<feature type="coiled-coil region" evidence="3">
    <location>
        <begin position="152"/>
        <end position="197"/>
    </location>
</feature>
<feature type="short sequence motif" description="Q motif">
    <location>
        <begin position="372"/>
        <end position="400"/>
    </location>
</feature>
<feature type="short sequence motif" description="DEAD box">
    <location>
        <begin position="529"/>
        <end position="532"/>
    </location>
</feature>
<feature type="compositionally biased region" description="Basic residues" evidence="6">
    <location>
        <begin position="1"/>
        <end position="24"/>
    </location>
</feature>
<feature type="compositionally biased region" description="Basic and acidic residues" evidence="6">
    <location>
        <begin position="26"/>
        <end position="49"/>
    </location>
</feature>
<feature type="compositionally biased region" description="Basic residues" evidence="6">
    <location>
        <begin position="50"/>
        <end position="73"/>
    </location>
</feature>
<feature type="compositionally biased region" description="Basic residues" evidence="6">
    <location>
        <begin position="81"/>
        <end position="103"/>
    </location>
</feature>
<feature type="compositionally biased region" description="Basic and acidic residues" evidence="6">
    <location>
        <begin position="112"/>
        <end position="200"/>
    </location>
</feature>
<feature type="compositionally biased region" description="Acidic residues" evidence="6">
    <location>
        <begin position="201"/>
        <end position="211"/>
    </location>
</feature>
<feature type="modified residue" description="Phosphoserine" evidence="9">
    <location>
        <position position="199"/>
    </location>
</feature>
<feature type="modified residue" description="N6-acetyllysine" evidence="2">
    <location>
        <position position="263"/>
    </location>
</feature>
<feature type="modified residue" description="Phosphotyrosine" evidence="2">
    <location>
        <position position="294"/>
    </location>
</feature>
<feature type="modified residue" description="Phosphoserine" evidence="2">
    <location>
        <position position="295"/>
    </location>
</feature>
<feature type="modified residue" description="Phosphoserine" evidence="2">
    <location>
        <position position="296"/>
    </location>
</feature>
<feature type="modified residue" description="Phosphoserine" evidence="2">
    <location>
        <position position="346"/>
    </location>
</feature>
<feature type="modified residue" description="N6-acetyllysine" evidence="2">
    <location>
        <position position="776"/>
    </location>
</feature>
<feature type="modified residue" description="Phosphoserine" evidence="8 9">
    <location>
        <position position="804"/>
    </location>
</feature>
<feature type="modified residue" description="N6-acetyllysine" evidence="1">
    <location>
        <position position="904"/>
    </location>
</feature>
<feature type="modified residue" description="Phosphoserine" evidence="2">
    <location>
        <position position="929"/>
    </location>
</feature>
<feature type="lipid moiety-binding region" description="N-myristoyl glycine" evidence="2">
    <location>
        <position position="2"/>
    </location>
</feature>
<feature type="cross-link" description="Glycyl lysine isopeptide (Lys-Gly) (interchain with G-Cter in SUMO2)" evidence="2">
    <location>
        <position position="186"/>
    </location>
</feature>
<feature type="cross-link" description="Glycyl lysine isopeptide (Lys-Gly) (interchain with G-Cter in SUMO2)" evidence="2">
    <location>
        <position position="325"/>
    </location>
</feature>
<feature type="cross-link" description="Glycyl lysine isopeptide (Lys-Gly) (interchain with G-Cter in SUMO2)" evidence="2">
    <location>
        <position position="779"/>
    </location>
</feature>
<feature type="cross-link" description="Glycyl lysine isopeptide (Lys-Gly) (interchain with G-Cter in SUMO2)" evidence="2">
    <location>
        <position position="908"/>
    </location>
</feature>
<feature type="cross-link" description="Glycyl lysine isopeptide (Lys-Gly) (interchain with G-Cter in SUMO2)" evidence="2">
    <location>
        <position position="916"/>
    </location>
</feature>
<protein>
    <recommendedName>
        <fullName>Probable ATP-dependent RNA helicase DDX46</fullName>
        <ecNumber>3.6.4.13</ecNumber>
    </recommendedName>
    <alternativeName>
        <fullName>DEAD box protein 46</fullName>
    </alternativeName>
    <alternativeName>
        <fullName>Helicase of 117.4 kDa</fullName>
    </alternativeName>
</protein>
<gene>
    <name type="primary">Ddx46</name>
    <name type="synonym">Hel117</name>
</gene>
<dbReference type="EC" id="3.6.4.13"/>
<dbReference type="EMBL" id="U25746">
    <property type="protein sequence ID" value="AAC52210.1"/>
    <property type="molecule type" value="mRNA"/>
</dbReference>
<dbReference type="EMBL" id="BC107590">
    <property type="protein sequence ID" value="AAI07591.1"/>
    <property type="molecule type" value="mRNA"/>
</dbReference>
<dbReference type="PIR" id="A57514">
    <property type="entry name" value="A57514"/>
</dbReference>
<dbReference type="RefSeq" id="NP_620798.1">
    <property type="nucleotide sequence ID" value="NM_139098.3"/>
</dbReference>
<dbReference type="SMR" id="Q62780"/>
<dbReference type="BioGRID" id="251453">
    <property type="interactions" value="1"/>
</dbReference>
<dbReference type="FunCoup" id="Q62780">
    <property type="interactions" value="4575"/>
</dbReference>
<dbReference type="IntAct" id="Q62780">
    <property type="interactions" value="3"/>
</dbReference>
<dbReference type="STRING" id="10116.ENSRNOP00000030772"/>
<dbReference type="GlyGen" id="Q62780">
    <property type="glycosylation" value="2 sites"/>
</dbReference>
<dbReference type="iPTMnet" id="Q62780"/>
<dbReference type="PhosphoSitePlus" id="Q62780"/>
<dbReference type="jPOST" id="Q62780"/>
<dbReference type="PaxDb" id="10116-ENSRNOP00000030772"/>
<dbReference type="GeneID" id="245957"/>
<dbReference type="KEGG" id="rno:245957"/>
<dbReference type="UCSC" id="RGD:708480">
    <property type="organism name" value="rat"/>
</dbReference>
<dbReference type="AGR" id="RGD:708480"/>
<dbReference type="CTD" id="9879"/>
<dbReference type="RGD" id="708480">
    <property type="gene designation" value="Ddx46"/>
</dbReference>
<dbReference type="VEuPathDB" id="HostDB:ENSRNOG00000021637"/>
<dbReference type="eggNOG" id="KOG0334">
    <property type="taxonomic scope" value="Eukaryota"/>
</dbReference>
<dbReference type="HOGENOM" id="CLU_003041_0_0_1"/>
<dbReference type="InParanoid" id="Q62780"/>
<dbReference type="OrthoDB" id="81774at9989"/>
<dbReference type="PhylomeDB" id="Q62780"/>
<dbReference type="TreeFam" id="TF354236"/>
<dbReference type="Reactome" id="R-RNO-72163">
    <property type="pathway name" value="mRNA Splicing - Major Pathway"/>
</dbReference>
<dbReference type="PRO" id="PR:Q62780"/>
<dbReference type="Proteomes" id="UP000002494">
    <property type="component" value="Chromosome 17"/>
</dbReference>
<dbReference type="Bgee" id="ENSRNOG00000021637">
    <property type="expression patterns" value="Expressed in spleen and 20 other cell types or tissues"/>
</dbReference>
<dbReference type="GO" id="GO:0015030">
    <property type="term" value="C:Cajal body"/>
    <property type="evidence" value="ECO:0007669"/>
    <property type="project" value="UniProtKB-SubCell"/>
</dbReference>
<dbReference type="GO" id="GO:0016607">
    <property type="term" value="C:nuclear speck"/>
    <property type="evidence" value="ECO:0007669"/>
    <property type="project" value="UniProtKB-SubCell"/>
</dbReference>
<dbReference type="GO" id="GO:0005634">
    <property type="term" value="C:nucleus"/>
    <property type="evidence" value="ECO:0000318"/>
    <property type="project" value="GO_Central"/>
</dbReference>
<dbReference type="GO" id="GO:0005684">
    <property type="term" value="C:U2-type spliceosomal complex"/>
    <property type="evidence" value="ECO:0000250"/>
    <property type="project" value="UniProtKB"/>
</dbReference>
<dbReference type="GO" id="GO:0005524">
    <property type="term" value="F:ATP binding"/>
    <property type="evidence" value="ECO:0007669"/>
    <property type="project" value="UniProtKB-KW"/>
</dbReference>
<dbReference type="GO" id="GO:0016887">
    <property type="term" value="F:ATP hydrolysis activity"/>
    <property type="evidence" value="ECO:0007669"/>
    <property type="project" value="RHEA"/>
</dbReference>
<dbReference type="GO" id="GO:0003723">
    <property type="term" value="F:RNA binding"/>
    <property type="evidence" value="ECO:0007669"/>
    <property type="project" value="UniProtKB-KW"/>
</dbReference>
<dbReference type="GO" id="GO:0003724">
    <property type="term" value="F:RNA helicase activity"/>
    <property type="evidence" value="ECO:0007669"/>
    <property type="project" value="UniProtKB-EC"/>
</dbReference>
<dbReference type="GO" id="GO:0000398">
    <property type="term" value="P:mRNA splicing, via spliceosome"/>
    <property type="evidence" value="ECO:0000250"/>
    <property type="project" value="UniProtKB"/>
</dbReference>
<dbReference type="GO" id="GO:1903241">
    <property type="term" value="P:U2-type prespliceosome assembly"/>
    <property type="evidence" value="ECO:0000250"/>
    <property type="project" value="UniProtKB"/>
</dbReference>
<dbReference type="CDD" id="cd17953">
    <property type="entry name" value="DEADc_DDX46"/>
    <property type="match status" value="1"/>
</dbReference>
<dbReference type="CDD" id="cd22473">
    <property type="entry name" value="KH-I_DDX46"/>
    <property type="match status" value="1"/>
</dbReference>
<dbReference type="CDD" id="cd18787">
    <property type="entry name" value="SF2_C_DEAD"/>
    <property type="match status" value="1"/>
</dbReference>
<dbReference type="FunFam" id="3.40.50.300:FF:000079">
    <property type="entry name" value="probable ATP-dependent RNA helicase DDX17"/>
    <property type="match status" value="1"/>
</dbReference>
<dbReference type="FunFam" id="3.40.50.300:FF:000584">
    <property type="entry name" value="probable ATP-dependent RNA helicase DDX46"/>
    <property type="match status" value="1"/>
</dbReference>
<dbReference type="Gene3D" id="3.40.50.300">
    <property type="entry name" value="P-loop containing nucleotide triphosphate hydrolases"/>
    <property type="match status" value="2"/>
</dbReference>
<dbReference type="InterPro" id="IPR011545">
    <property type="entry name" value="DEAD/DEAH_box_helicase_dom"/>
</dbReference>
<dbReference type="InterPro" id="IPR014001">
    <property type="entry name" value="Helicase_ATP-bd"/>
</dbReference>
<dbReference type="InterPro" id="IPR001650">
    <property type="entry name" value="Helicase_C-like"/>
</dbReference>
<dbReference type="InterPro" id="IPR027417">
    <property type="entry name" value="P-loop_NTPase"/>
</dbReference>
<dbReference type="InterPro" id="IPR056149">
    <property type="entry name" value="PRP5/DDX46/KHDC4_KH"/>
</dbReference>
<dbReference type="InterPro" id="IPR000629">
    <property type="entry name" value="RNA-helicase_DEAD-box_CS"/>
</dbReference>
<dbReference type="InterPro" id="IPR014014">
    <property type="entry name" value="RNA_helicase_DEAD_Q_motif"/>
</dbReference>
<dbReference type="PANTHER" id="PTHR47958">
    <property type="entry name" value="ATP-DEPENDENT RNA HELICASE DBP3"/>
    <property type="match status" value="1"/>
</dbReference>
<dbReference type="Pfam" id="PF00270">
    <property type="entry name" value="DEAD"/>
    <property type="match status" value="1"/>
</dbReference>
<dbReference type="Pfam" id="PF00271">
    <property type="entry name" value="Helicase_C"/>
    <property type="match status" value="1"/>
</dbReference>
<dbReference type="Pfam" id="PF23469">
    <property type="entry name" value="KH_12"/>
    <property type="match status" value="1"/>
</dbReference>
<dbReference type="SMART" id="SM00487">
    <property type="entry name" value="DEXDc"/>
    <property type="match status" value="1"/>
</dbReference>
<dbReference type="SMART" id="SM00490">
    <property type="entry name" value="HELICc"/>
    <property type="match status" value="1"/>
</dbReference>
<dbReference type="SUPFAM" id="SSF52540">
    <property type="entry name" value="P-loop containing nucleoside triphosphate hydrolases"/>
    <property type="match status" value="2"/>
</dbReference>
<dbReference type="PROSITE" id="PS00039">
    <property type="entry name" value="DEAD_ATP_HELICASE"/>
    <property type="match status" value="1"/>
</dbReference>
<dbReference type="PROSITE" id="PS51192">
    <property type="entry name" value="HELICASE_ATP_BIND_1"/>
    <property type="match status" value="1"/>
</dbReference>
<dbReference type="PROSITE" id="PS51194">
    <property type="entry name" value="HELICASE_CTER"/>
    <property type="match status" value="1"/>
</dbReference>
<dbReference type="PROSITE" id="PS51195">
    <property type="entry name" value="Q_MOTIF"/>
    <property type="match status" value="1"/>
</dbReference>
<evidence type="ECO:0000250" key="1">
    <source>
        <dbReference type="UniProtKB" id="Q569Z5"/>
    </source>
</evidence>
<evidence type="ECO:0000250" key="2">
    <source>
        <dbReference type="UniProtKB" id="Q7L014"/>
    </source>
</evidence>
<evidence type="ECO:0000255" key="3"/>
<evidence type="ECO:0000255" key="4">
    <source>
        <dbReference type="PROSITE-ProRule" id="PRU00541"/>
    </source>
</evidence>
<evidence type="ECO:0000255" key="5">
    <source>
        <dbReference type="PROSITE-ProRule" id="PRU00542"/>
    </source>
</evidence>
<evidence type="ECO:0000256" key="6">
    <source>
        <dbReference type="SAM" id="MobiDB-lite"/>
    </source>
</evidence>
<evidence type="ECO:0000305" key="7"/>
<evidence type="ECO:0007744" key="8">
    <source>
    </source>
</evidence>
<evidence type="ECO:0007744" key="9">
    <source>
    </source>
</evidence>
<name>DDX46_RAT</name>